<proteinExistence type="inferred from homology"/>
<evidence type="ECO:0000255" key="1">
    <source>
        <dbReference type="HAMAP-Rule" id="MF_00203"/>
    </source>
</evidence>
<comment type="function">
    <text evidence="1">The UvrABC repair system catalyzes the recognition and processing of DNA lesions. UvrC both incises the 5' and 3' sides of the lesion. The N-terminal half is responsible for the 3' incision and the C-terminal half is responsible for the 5' incision.</text>
</comment>
<comment type="subunit">
    <text evidence="1">Interacts with UvrB in an incision complex.</text>
</comment>
<comment type="subcellular location">
    <subcellularLocation>
        <location evidence="1">Cytoplasm</location>
    </subcellularLocation>
</comment>
<comment type="similarity">
    <text evidence="1">Belongs to the UvrC family.</text>
</comment>
<organism>
    <name type="scientific">Mycobacterium bovis (strain BCG / Tokyo 172 / ATCC 35737 / TMC 1019)</name>
    <dbReference type="NCBI Taxonomy" id="561275"/>
    <lineage>
        <taxon>Bacteria</taxon>
        <taxon>Bacillati</taxon>
        <taxon>Actinomycetota</taxon>
        <taxon>Actinomycetes</taxon>
        <taxon>Mycobacteriales</taxon>
        <taxon>Mycobacteriaceae</taxon>
        <taxon>Mycobacterium</taxon>
        <taxon>Mycobacterium tuberculosis complex</taxon>
    </lineage>
</organism>
<reference key="1">
    <citation type="journal article" date="2009" name="Vaccine">
        <title>Whole genome sequence analysis of Mycobacterium bovis bacillus Calmette-Guerin (BCG) Tokyo 172: a comparative study of BCG vaccine substrains.</title>
        <authorList>
            <person name="Seki M."/>
            <person name="Honda I."/>
            <person name="Fujita I."/>
            <person name="Yano I."/>
            <person name="Yamamoto S."/>
            <person name="Koyama A."/>
        </authorList>
    </citation>
    <scope>NUCLEOTIDE SEQUENCE [LARGE SCALE GENOMIC DNA]</scope>
    <source>
        <strain>BCG / Tokyo 172 / ATCC 35737 / TMC 1019</strain>
    </source>
</reference>
<name>UVRC_MYCBT</name>
<protein>
    <recommendedName>
        <fullName evidence="1">UvrABC system protein C</fullName>
        <shortName evidence="1">Protein UvrC</shortName>
    </recommendedName>
    <alternativeName>
        <fullName evidence="1">Excinuclease ABC subunit C</fullName>
    </alternativeName>
</protein>
<dbReference type="EMBL" id="AP010918">
    <property type="protein sequence ID" value="BAH25744.1"/>
    <property type="molecule type" value="Genomic_DNA"/>
</dbReference>
<dbReference type="RefSeq" id="WP_003407347.1">
    <property type="nucleotide sequence ID" value="NZ_CP014566.1"/>
</dbReference>
<dbReference type="SMR" id="C1AN65"/>
<dbReference type="GeneID" id="45425398"/>
<dbReference type="KEGG" id="mbt:JTY_1456"/>
<dbReference type="HOGENOM" id="CLU_014841_1_1_11"/>
<dbReference type="GO" id="GO:0005737">
    <property type="term" value="C:cytoplasm"/>
    <property type="evidence" value="ECO:0007669"/>
    <property type="project" value="UniProtKB-SubCell"/>
</dbReference>
<dbReference type="GO" id="GO:0009380">
    <property type="term" value="C:excinuclease repair complex"/>
    <property type="evidence" value="ECO:0007669"/>
    <property type="project" value="InterPro"/>
</dbReference>
<dbReference type="GO" id="GO:0003677">
    <property type="term" value="F:DNA binding"/>
    <property type="evidence" value="ECO:0007669"/>
    <property type="project" value="UniProtKB-UniRule"/>
</dbReference>
<dbReference type="GO" id="GO:0009381">
    <property type="term" value="F:excinuclease ABC activity"/>
    <property type="evidence" value="ECO:0007669"/>
    <property type="project" value="UniProtKB-UniRule"/>
</dbReference>
<dbReference type="GO" id="GO:0006289">
    <property type="term" value="P:nucleotide-excision repair"/>
    <property type="evidence" value="ECO:0007669"/>
    <property type="project" value="UniProtKB-UniRule"/>
</dbReference>
<dbReference type="GO" id="GO:0009432">
    <property type="term" value="P:SOS response"/>
    <property type="evidence" value="ECO:0007669"/>
    <property type="project" value="UniProtKB-UniRule"/>
</dbReference>
<dbReference type="CDD" id="cd10434">
    <property type="entry name" value="GIY-YIG_UvrC_Cho"/>
    <property type="match status" value="1"/>
</dbReference>
<dbReference type="FunFam" id="1.10.150.20:FF:000005">
    <property type="entry name" value="UvrABC system protein C"/>
    <property type="match status" value="1"/>
</dbReference>
<dbReference type="FunFam" id="3.30.420.340:FF:000003">
    <property type="entry name" value="UvrABC system protein C"/>
    <property type="match status" value="1"/>
</dbReference>
<dbReference type="FunFam" id="3.40.1440.10:FF:000001">
    <property type="entry name" value="UvrABC system protein C"/>
    <property type="match status" value="1"/>
</dbReference>
<dbReference type="Gene3D" id="1.10.150.20">
    <property type="entry name" value="5' to 3' exonuclease, C-terminal subdomain"/>
    <property type="match status" value="1"/>
</dbReference>
<dbReference type="Gene3D" id="3.40.1440.10">
    <property type="entry name" value="GIY-YIG endonuclease"/>
    <property type="match status" value="1"/>
</dbReference>
<dbReference type="Gene3D" id="4.10.860.10">
    <property type="entry name" value="UVR domain"/>
    <property type="match status" value="1"/>
</dbReference>
<dbReference type="Gene3D" id="3.30.420.340">
    <property type="entry name" value="UvrC, RNAse H endonuclease domain"/>
    <property type="match status" value="1"/>
</dbReference>
<dbReference type="HAMAP" id="MF_00203">
    <property type="entry name" value="UvrC"/>
    <property type="match status" value="1"/>
</dbReference>
<dbReference type="InterPro" id="IPR000305">
    <property type="entry name" value="GIY-YIG_endonuc"/>
</dbReference>
<dbReference type="InterPro" id="IPR035901">
    <property type="entry name" value="GIY-YIG_endonuc_sf"/>
</dbReference>
<dbReference type="InterPro" id="IPR047296">
    <property type="entry name" value="GIY-YIG_UvrC_Cho"/>
</dbReference>
<dbReference type="InterPro" id="IPR003583">
    <property type="entry name" value="Hlx-hairpin-Hlx_DNA-bd_motif"/>
</dbReference>
<dbReference type="InterPro" id="IPR010994">
    <property type="entry name" value="RuvA_2-like"/>
</dbReference>
<dbReference type="InterPro" id="IPR001943">
    <property type="entry name" value="UVR_dom"/>
</dbReference>
<dbReference type="InterPro" id="IPR036876">
    <property type="entry name" value="UVR_dom_sf"/>
</dbReference>
<dbReference type="InterPro" id="IPR050066">
    <property type="entry name" value="UvrABC_protein_C"/>
</dbReference>
<dbReference type="InterPro" id="IPR004791">
    <property type="entry name" value="UvrC"/>
</dbReference>
<dbReference type="InterPro" id="IPR001162">
    <property type="entry name" value="UvrC_RNase_H_dom"/>
</dbReference>
<dbReference type="InterPro" id="IPR038476">
    <property type="entry name" value="UvrC_RNase_H_dom_sf"/>
</dbReference>
<dbReference type="NCBIfam" id="NF001824">
    <property type="entry name" value="PRK00558.1-5"/>
    <property type="match status" value="1"/>
</dbReference>
<dbReference type="NCBIfam" id="TIGR00194">
    <property type="entry name" value="uvrC"/>
    <property type="match status" value="1"/>
</dbReference>
<dbReference type="PANTHER" id="PTHR30562:SF1">
    <property type="entry name" value="UVRABC SYSTEM PROTEIN C"/>
    <property type="match status" value="1"/>
</dbReference>
<dbReference type="PANTHER" id="PTHR30562">
    <property type="entry name" value="UVRC/OXIDOREDUCTASE"/>
    <property type="match status" value="1"/>
</dbReference>
<dbReference type="Pfam" id="PF01541">
    <property type="entry name" value="GIY-YIG"/>
    <property type="match status" value="1"/>
</dbReference>
<dbReference type="Pfam" id="PF14520">
    <property type="entry name" value="HHH_5"/>
    <property type="match status" value="1"/>
</dbReference>
<dbReference type="Pfam" id="PF02151">
    <property type="entry name" value="UVR"/>
    <property type="match status" value="1"/>
</dbReference>
<dbReference type="Pfam" id="PF22920">
    <property type="entry name" value="UvrC_RNaseH"/>
    <property type="match status" value="1"/>
</dbReference>
<dbReference type="Pfam" id="PF08459">
    <property type="entry name" value="UvrC_RNaseH_dom"/>
    <property type="match status" value="1"/>
</dbReference>
<dbReference type="SMART" id="SM00465">
    <property type="entry name" value="GIYc"/>
    <property type="match status" value="1"/>
</dbReference>
<dbReference type="SMART" id="SM00278">
    <property type="entry name" value="HhH1"/>
    <property type="match status" value="2"/>
</dbReference>
<dbReference type="SUPFAM" id="SSF46600">
    <property type="entry name" value="C-terminal UvrC-binding domain of UvrB"/>
    <property type="match status" value="1"/>
</dbReference>
<dbReference type="SUPFAM" id="SSF82771">
    <property type="entry name" value="GIY-YIG endonuclease"/>
    <property type="match status" value="1"/>
</dbReference>
<dbReference type="SUPFAM" id="SSF47781">
    <property type="entry name" value="RuvA domain 2-like"/>
    <property type="match status" value="1"/>
</dbReference>
<dbReference type="PROSITE" id="PS50164">
    <property type="entry name" value="GIY_YIG"/>
    <property type="match status" value="1"/>
</dbReference>
<dbReference type="PROSITE" id="PS50151">
    <property type="entry name" value="UVR"/>
    <property type="match status" value="1"/>
</dbReference>
<dbReference type="PROSITE" id="PS50165">
    <property type="entry name" value="UVRC"/>
    <property type="match status" value="1"/>
</dbReference>
<accession>C1AN65</accession>
<sequence>MPDPATYRPAPGSIPVEPGVYRFRDQHGRVIYVGKAKSLRSRLTSYFADVASLAPRTRQLVTTAAKVEWTVVGTEVEALQLEYTWIKEFDPRFNVRYRDDKSYPVLAVTLGEEFPRLMVYRGPRRKGVRYFGPYSHAWAIRETLDLLTRVFPARTCSAGVFKRHRQIDRPCLLGYIDKCSAPCIGRVDAAQHRQIVADFCDFLSGKTDRFARALEQQMNAAAEQLDFERAARLRDDLSALKRAMEKQAVVLGDGTDADVVAFADDELEAAVQVFHVRGGRVRGQRGWIVEKPGEPGDSGIQLVEQFLTQFYGDQAALDDAADESANPVPREVLVPCLPSNAEELASWLSGLRGSRVVLRVPRRGDKRALAETVHRNAEDALQQHKLKRASDFNARSAALQSIQDSLGLADAPLRIECVDVSHVQGTDVVGSLVVFEDGLPRKSDYRHFGIREAAGQGRSDDVACIAEVTRRRFLRHLRDQSDPDLLSPERKSRRFAYPPNLYVVDGGAPQVNAASAVIDELGVTDVAVIGLAKRLEEVWVPSEPDPIIMPRNSEGLYLLQRVRDEAHRFAITYHRSKRSTRMTASALDSVPGLGEHRRKALVTHFGSIARLKEATVDEITAVPGIGVATATAVHDALRPDSSGAAR</sequence>
<gene>
    <name evidence="1" type="primary">uvrC</name>
    <name type="ordered locus">JTY_1456</name>
</gene>
<feature type="chain" id="PRO_1000200593" description="UvrABC system protein C">
    <location>
        <begin position="1"/>
        <end position="646"/>
    </location>
</feature>
<feature type="domain" description="GIY-YIG" evidence="1">
    <location>
        <begin position="16"/>
        <end position="95"/>
    </location>
</feature>
<feature type="domain" description="UVR" evidence="1">
    <location>
        <begin position="208"/>
        <end position="243"/>
    </location>
</feature>
<keyword id="KW-0963">Cytoplasm</keyword>
<keyword id="KW-0227">DNA damage</keyword>
<keyword id="KW-0228">DNA excision</keyword>
<keyword id="KW-0234">DNA repair</keyword>
<keyword id="KW-0267">Excision nuclease</keyword>
<keyword id="KW-0742">SOS response</keyword>